<comment type="function">
    <text evidence="1">Catalyzes the reversible cyclization of carbamoyl aspartate to dihydroorotate.</text>
</comment>
<comment type="catalytic activity">
    <reaction evidence="1">
        <text>(S)-dihydroorotate + H2O = N-carbamoyl-L-aspartate + H(+)</text>
        <dbReference type="Rhea" id="RHEA:24296"/>
        <dbReference type="ChEBI" id="CHEBI:15377"/>
        <dbReference type="ChEBI" id="CHEBI:15378"/>
        <dbReference type="ChEBI" id="CHEBI:30864"/>
        <dbReference type="ChEBI" id="CHEBI:32814"/>
        <dbReference type="EC" id="3.5.2.3"/>
    </reaction>
</comment>
<comment type="cofactor">
    <cofactor evidence="1">
        <name>Zn(2+)</name>
        <dbReference type="ChEBI" id="CHEBI:29105"/>
    </cofactor>
    <text evidence="1">Binds 2 Zn(2+) ions per subunit.</text>
</comment>
<comment type="pathway">
    <text evidence="1">Pyrimidine metabolism; UMP biosynthesis via de novo pathway; (S)-dihydroorotate from bicarbonate: step 3/3.</text>
</comment>
<comment type="subunit">
    <text evidence="1">Homodimer.</text>
</comment>
<comment type="similarity">
    <text evidence="1">Belongs to the metallo-dependent hydrolases superfamily. DHOase family. Class II DHOase subfamily.</text>
</comment>
<name>PYRC_HELPJ</name>
<sequence length="339" mass="37915">MEITLFDPIDAHLHVRENALLKAVLEYSSEPFSAAVIMPNLSKPLIDTPITLEYEEEILKNSSNFKPLMSLYFNDGLTLEELQRAKNKGIKFLKLYPKGMTTNAQNGTSDLLGEKTLEVLENAQKLGFILCVHAEQAGFCLDKEFLCHSVLETFALSFPKLKIIIEHLSDWRSIALIEKHDNLYATLTLHHISMTLDDLLGGSLDPHCFCKPLIKTKKDQERLLSLALKAHPKISFGSDSAPHFISKKHSANIPAGIFSAPILLPALCELFEKHNALENLQAFISDNAKKIYALDNLPSKKAHLSKKPFIVPTHTLCLNEKIAILRGGETLSWNLQEIA</sequence>
<feature type="chain" id="PRO_0000147209" description="Dihydroorotase">
    <location>
        <begin position="1"/>
        <end position="339"/>
    </location>
</feature>
<feature type="active site" evidence="1">
    <location>
        <position position="239"/>
    </location>
</feature>
<feature type="binding site" evidence="1">
    <location>
        <position position="12"/>
    </location>
    <ligand>
        <name>Zn(2+)</name>
        <dbReference type="ChEBI" id="CHEBI:29105"/>
        <label>1</label>
    </ligand>
</feature>
<feature type="binding site" evidence="1">
    <location>
        <begin position="14"/>
        <end position="16"/>
    </location>
    <ligand>
        <name>substrate</name>
    </ligand>
</feature>
<feature type="binding site" evidence="1">
    <location>
        <position position="14"/>
    </location>
    <ligand>
        <name>Zn(2+)</name>
        <dbReference type="ChEBI" id="CHEBI:29105"/>
        <label>1</label>
    </ligand>
</feature>
<feature type="binding site" evidence="1">
    <location>
        <position position="40"/>
    </location>
    <ligand>
        <name>substrate</name>
    </ligand>
</feature>
<feature type="binding site" description="via carbamate group" evidence="1">
    <location>
        <position position="94"/>
    </location>
    <ligand>
        <name>Zn(2+)</name>
        <dbReference type="ChEBI" id="CHEBI:29105"/>
        <label>1</label>
    </ligand>
</feature>
<feature type="binding site" description="via carbamate group" evidence="1">
    <location>
        <position position="94"/>
    </location>
    <ligand>
        <name>Zn(2+)</name>
        <dbReference type="ChEBI" id="CHEBI:29105"/>
        <label>2</label>
    </ligand>
</feature>
<feature type="binding site" evidence="1">
    <location>
        <position position="133"/>
    </location>
    <ligand>
        <name>substrate</name>
    </ligand>
</feature>
<feature type="binding site" evidence="1">
    <location>
        <position position="133"/>
    </location>
    <ligand>
        <name>Zn(2+)</name>
        <dbReference type="ChEBI" id="CHEBI:29105"/>
        <label>2</label>
    </ligand>
</feature>
<feature type="binding site" evidence="1">
    <location>
        <position position="167"/>
    </location>
    <ligand>
        <name>Zn(2+)</name>
        <dbReference type="ChEBI" id="CHEBI:29105"/>
        <label>2</label>
    </ligand>
</feature>
<feature type="binding site" evidence="1">
    <location>
        <position position="239"/>
    </location>
    <ligand>
        <name>Zn(2+)</name>
        <dbReference type="ChEBI" id="CHEBI:29105"/>
        <label>1</label>
    </ligand>
</feature>
<feature type="binding site" evidence="1">
    <location>
        <position position="243"/>
    </location>
    <ligand>
        <name>substrate</name>
    </ligand>
</feature>
<feature type="binding site" evidence="1">
    <location>
        <position position="255"/>
    </location>
    <ligand>
        <name>substrate</name>
    </ligand>
</feature>
<feature type="modified residue" description="N6-carboxylysine" evidence="1">
    <location>
        <position position="94"/>
    </location>
</feature>
<protein>
    <recommendedName>
        <fullName evidence="1">Dihydroorotase</fullName>
        <shortName evidence="1">DHOase</shortName>
        <ecNumber evidence="1">3.5.2.3</ecNumber>
    </recommendedName>
</protein>
<accession>Q9ZLQ0</accession>
<proteinExistence type="inferred from homology"/>
<evidence type="ECO:0000255" key="1">
    <source>
        <dbReference type="HAMAP-Rule" id="MF_00219"/>
    </source>
</evidence>
<dbReference type="EC" id="3.5.2.3" evidence="1"/>
<dbReference type="EMBL" id="AE001439">
    <property type="protein sequence ID" value="AAD06094.1"/>
    <property type="molecule type" value="Genomic_DNA"/>
</dbReference>
<dbReference type="PIR" id="A71922">
    <property type="entry name" value="A71922"/>
</dbReference>
<dbReference type="RefSeq" id="WP_000406664.1">
    <property type="nucleotide sequence ID" value="NC_000921.1"/>
</dbReference>
<dbReference type="SMR" id="Q9ZLQ0"/>
<dbReference type="KEGG" id="hpj:jhp_0528"/>
<dbReference type="PATRIC" id="fig|85963.30.peg.466"/>
<dbReference type="eggNOG" id="COG0418">
    <property type="taxonomic scope" value="Bacteria"/>
</dbReference>
<dbReference type="UniPathway" id="UPA00070">
    <property type="reaction ID" value="UER00117"/>
</dbReference>
<dbReference type="Proteomes" id="UP000000804">
    <property type="component" value="Chromosome"/>
</dbReference>
<dbReference type="GO" id="GO:0005829">
    <property type="term" value="C:cytosol"/>
    <property type="evidence" value="ECO:0007669"/>
    <property type="project" value="TreeGrafter"/>
</dbReference>
<dbReference type="GO" id="GO:0004151">
    <property type="term" value="F:dihydroorotase activity"/>
    <property type="evidence" value="ECO:0007669"/>
    <property type="project" value="UniProtKB-UniRule"/>
</dbReference>
<dbReference type="GO" id="GO:0008270">
    <property type="term" value="F:zinc ion binding"/>
    <property type="evidence" value="ECO:0007669"/>
    <property type="project" value="UniProtKB-UniRule"/>
</dbReference>
<dbReference type="GO" id="GO:0006207">
    <property type="term" value="P:'de novo' pyrimidine nucleobase biosynthetic process"/>
    <property type="evidence" value="ECO:0007669"/>
    <property type="project" value="TreeGrafter"/>
</dbReference>
<dbReference type="GO" id="GO:0044205">
    <property type="term" value="P:'de novo' UMP biosynthetic process"/>
    <property type="evidence" value="ECO:0007669"/>
    <property type="project" value="UniProtKB-UniRule"/>
</dbReference>
<dbReference type="CDD" id="cd01294">
    <property type="entry name" value="DHOase"/>
    <property type="match status" value="1"/>
</dbReference>
<dbReference type="FunFam" id="3.20.20.140:FF:000110">
    <property type="entry name" value="Dihydroorotase"/>
    <property type="match status" value="1"/>
</dbReference>
<dbReference type="Gene3D" id="3.20.20.140">
    <property type="entry name" value="Metal-dependent hydrolases"/>
    <property type="match status" value="1"/>
</dbReference>
<dbReference type="HAMAP" id="MF_00219">
    <property type="entry name" value="PyrC_classII"/>
    <property type="match status" value="1"/>
</dbReference>
<dbReference type="InterPro" id="IPR004721">
    <property type="entry name" value="DHOdimr"/>
</dbReference>
<dbReference type="InterPro" id="IPR002195">
    <property type="entry name" value="Dihydroorotase_CS"/>
</dbReference>
<dbReference type="InterPro" id="IPR032466">
    <property type="entry name" value="Metal_Hydrolase"/>
</dbReference>
<dbReference type="NCBIfam" id="TIGR00856">
    <property type="entry name" value="pyrC_dimer"/>
    <property type="match status" value="1"/>
</dbReference>
<dbReference type="PANTHER" id="PTHR43137">
    <property type="entry name" value="DIHYDROOROTASE"/>
    <property type="match status" value="1"/>
</dbReference>
<dbReference type="PANTHER" id="PTHR43137:SF1">
    <property type="entry name" value="DIHYDROOROTASE"/>
    <property type="match status" value="1"/>
</dbReference>
<dbReference type="PIRSF" id="PIRSF001237">
    <property type="entry name" value="DHOdimr"/>
    <property type="match status" value="1"/>
</dbReference>
<dbReference type="SUPFAM" id="SSF51556">
    <property type="entry name" value="Metallo-dependent hydrolases"/>
    <property type="match status" value="1"/>
</dbReference>
<dbReference type="PROSITE" id="PS00482">
    <property type="entry name" value="DIHYDROOROTASE_1"/>
    <property type="match status" value="1"/>
</dbReference>
<dbReference type="PROSITE" id="PS00483">
    <property type="entry name" value="DIHYDROOROTASE_2"/>
    <property type="match status" value="1"/>
</dbReference>
<organism>
    <name type="scientific">Helicobacter pylori (strain J99 / ATCC 700824)</name>
    <name type="common">Campylobacter pylori J99</name>
    <dbReference type="NCBI Taxonomy" id="85963"/>
    <lineage>
        <taxon>Bacteria</taxon>
        <taxon>Pseudomonadati</taxon>
        <taxon>Campylobacterota</taxon>
        <taxon>Epsilonproteobacteria</taxon>
        <taxon>Campylobacterales</taxon>
        <taxon>Helicobacteraceae</taxon>
        <taxon>Helicobacter</taxon>
    </lineage>
</organism>
<gene>
    <name evidence="1" type="primary">pyrC</name>
    <name type="ordered locus">jhp_0528</name>
</gene>
<keyword id="KW-0378">Hydrolase</keyword>
<keyword id="KW-0479">Metal-binding</keyword>
<keyword id="KW-0665">Pyrimidine biosynthesis</keyword>
<keyword id="KW-0862">Zinc</keyword>
<reference key="1">
    <citation type="journal article" date="1999" name="Nature">
        <title>Genomic sequence comparison of two unrelated isolates of the human gastric pathogen Helicobacter pylori.</title>
        <authorList>
            <person name="Alm R.A."/>
            <person name="Ling L.-S.L."/>
            <person name="Moir D.T."/>
            <person name="King B.L."/>
            <person name="Brown E.D."/>
            <person name="Doig P.C."/>
            <person name="Smith D.R."/>
            <person name="Noonan B."/>
            <person name="Guild B.C."/>
            <person name="deJonge B.L."/>
            <person name="Carmel G."/>
            <person name="Tummino P.J."/>
            <person name="Caruso A."/>
            <person name="Uria-Nickelsen M."/>
            <person name="Mills D.M."/>
            <person name="Ives C."/>
            <person name="Gibson R."/>
            <person name="Merberg D."/>
            <person name="Mills S.D."/>
            <person name="Jiang Q."/>
            <person name="Taylor D.E."/>
            <person name="Vovis G.F."/>
            <person name="Trust T.J."/>
        </authorList>
    </citation>
    <scope>NUCLEOTIDE SEQUENCE [LARGE SCALE GENOMIC DNA]</scope>
    <source>
        <strain>J99 / ATCC 700824</strain>
    </source>
</reference>